<protein>
    <recommendedName>
        <fullName>Peptidyl-prolyl cis-trans isomerase, mitochondrial</fullName>
        <shortName>PPIase</shortName>
        <ecNumber>5.2.1.8</ecNumber>
    </recommendedName>
    <alternativeName>
        <fullName>Cyclophilin</fullName>
        <shortName>CPH</shortName>
    </alternativeName>
    <alternativeName>
        <fullName>Cyclosporin A-binding protein</fullName>
    </alternativeName>
    <alternativeName>
        <fullName>Rotamase</fullName>
    </alternativeName>
</protein>
<proteinExistence type="evidence at protein level"/>
<evidence type="ECO:0000255" key="1">
    <source>
        <dbReference type="PROSITE-ProRule" id="PRU00156"/>
    </source>
</evidence>
<evidence type="ECO:0000303" key="2">
    <source>
    </source>
</evidence>
<evidence type="ECO:0000305" key="3"/>
<keyword id="KW-0024">Alternative initiation</keyword>
<keyword id="KW-0025">Alternative splicing</keyword>
<keyword id="KW-0963">Cytoplasm</keyword>
<keyword id="KW-0903">Direct protein sequencing</keyword>
<keyword id="KW-0413">Isomerase</keyword>
<keyword id="KW-0496">Mitochondrion</keyword>
<keyword id="KW-1185">Reference proteome</keyword>
<keyword id="KW-0697">Rotamase</keyword>
<keyword id="KW-0809">Transit peptide</keyword>
<feature type="transit peptide" description="Mitochondrion">
    <location>
        <begin position="1"/>
        <end position="44"/>
    </location>
</feature>
<feature type="chain" id="PRO_0000025475" description="Peptidyl-prolyl cis-trans isomerase, mitochondrial">
    <location>
        <begin position="45"/>
        <end position="223"/>
    </location>
</feature>
<feature type="domain" description="PPIase cyclophilin-type" evidence="1">
    <location>
        <begin position="62"/>
        <end position="222"/>
    </location>
</feature>
<feature type="splice variant" id="VSP_018863" description="In isoform Cytosolic." evidence="2">
    <location>
        <begin position="1"/>
        <end position="43"/>
    </location>
</feature>
<feature type="splice variant" id="VSP_029976" description="In isoform Short." evidence="3">
    <original>GGDFTRGNGTGGKSIYGEKFADENFAKKHVRPGLLSMANAGPNTNGSQFFVTTVPTSWLDGRHVVFGEVADDESMKVVKALEATGSSSGAIRYSKKPTIVDCGAL</original>
    <variation>AAVLFVTPRSPPLSTAALSKFPCGHCRGF</variation>
    <location>
        <begin position="119"/>
        <end position="223"/>
    </location>
</feature>
<reference key="1">
    <citation type="journal article" date="1988" name="J. Biol. Chem.">
        <title>Cyclosporin A-binding protein (cyclophilin) of Neurospora crassa. One gene codes for both the cytosolic and mitochondrial forms.</title>
        <authorList>
            <person name="Tropschug M."/>
            <person name="Nicholson D.W."/>
            <person name="Hartl F.-U."/>
            <person name="Kohler H."/>
            <person name="Pfanner N."/>
            <person name="Wachter E."/>
            <person name="Neupert W."/>
        </authorList>
    </citation>
    <scope>NUCLEOTIDE SEQUENCE [MRNA] (ISOFORMS CYTOSOLIC AND MITOCHONDRIAL)</scope>
    <scope>PARTIAL PROTEIN SEQUENCE</scope>
    <scope>ALTERNATIVE INITIATION</scope>
    <source>
        <strain>ATCC 24698 / 74-OR23-1A / CBS 708.71 / DSM 1257 / FGSC 987</strain>
    </source>
</reference>
<reference key="2">
    <citation type="journal article" date="1990" name="Nucleic Acids Res.">
        <title>Nucleotide sequence of the gene coding for cyclophilin/peptidyl-prolyl cis-trans isomerase of Neurospora crassa.</title>
        <authorList>
            <person name="Tropschug M."/>
        </authorList>
    </citation>
    <scope>NUCLEOTIDE SEQUENCE [GENOMIC DNA]</scope>
</reference>
<reference key="3">
    <citation type="journal article" date="2003" name="Nature">
        <title>The genome sequence of the filamentous fungus Neurospora crassa.</title>
        <authorList>
            <person name="Galagan J.E."/>
            <person name="Calvo S.E."/>
            <person name="Borkovich K.A."/>
            <person name="Selker E.U."/>
            <person name="Read N.D."/>
            <person name="Jaffe D.B."/>
            <person name="FitzHugh W."/>
            <person name="Ma L.-J."/>
            <person name="Smirnov S."/>
            <person name="Purcell S."/>
            <person name="Rehman B."/>
            <person name="Elkins T."/>
            <person name="Engels R."/>
            <person name="Wang S."/>
            <person name="Nielsen C.B."/>
            <person name="Butler J."/>
            <person name="Endrizzi M."/>
            <person name="Qui D."/>
            <person name="Ianakiev P."/>
            <person name="Bell-Pedersen D."/>
            <person name="Nelson M.A."/>
            <person name="Werner-Washburne M."/>
            <person name="Selitrennikoff C.P."/>
            <person name="Kinsey J.A."/>
            <person name="Braun E.L."/>
            <person name="Zelter A."/>
            <person name="Schulte U."/>
            <person name="Kothe G.O."/>
            <person name="Jedd G."/>
            <person name="Mewes H.-W."/>
            <person name="Staben C."/>
            <person name="Marcotte E."/>
            <person name="Greenberg D."/>
            <person name="Roy A."/>
            <person name="Foley K."/>
            <person name="Naylor J."/>
            <person name="Stange-Thomann N."/>
            <person name="Barrett R."/>
            <person name="Gnerre S."/>
            <person name="Kamal M."/>
            <person name="Kamvysselis M."/>
            <person name="Mauceli E.W."/>
            <person name="Bielke C."/>
            <person name="Rudd S."/>
            <person name="Frishman D."/>
            <person name="Krystofova S."/>
            <person name="Rasmussen C."/>
            <person name="Metzenberg R.L."/>
            <person name="Perkins D.D."/>
            <person name="Kroken S."/>
            <person name="Cogoni C."/>
            <person name="Macino G."/>
            <person name="Catcheside D.E.A."/>
            <person name="Li W."/>
            <person name="Pratt R.J."/>
            <person name="Osmani S.A."/>
            <person name="DeSouza C.P.C."/>
            <person name="Glass N.L."/>
            <person name="Orbach M.J."/>
            <person name="Berglund J.A."/>
            <person name="Voelker R."/>
            <person name="Yarden O."/>
            <person name="Plamann M."/>
            <person name="Seiler S."/>
            <person name="Dunlap J.C."/>
            <person name="Radford A."/>
            <person name="Aramayo R."/>
            <person name="Natvig D.O."/>
            <person name="Alex L.A."/>
            <person name="Mannhaupt G."/>
            <person name="Ebbole D.J."/>
            <person name="Freitag M."/>
            <person name="Paulsen I."/>
            <person name="Sachs M.S."/>
            <person name="Lander E.S."/>
            <person name="Nusbaum C."/>
            <person name="Birren B.W."/>
        </authorList>
    </citation>
    <scope>NUCLEOTIDE SEQUENCE [LARGE SCALE GENOMIC DNA]</scope>
    <source>
        <strain>ATCC 24698 / 74-OR23-1A / CBS 708.71 / DSM 1257 / FGSC 987</strain>
    </source>
</reference>
<gene>
    <name type="primary">csr-1</name>
    <name type="synonym">cyp</name>
    <name type="ORF">NCU00726</name>
</gene>
<name>CYPH_NEUCR</name>
<dbReference type="EC" id="5.2.1.8"/>
<dbReference type="EMBL" id="J03963">
    <property type="protein sequence ID" value="AAA33584.1"/>
    <property type="molecule type" value="mRNA"/>
</dbReference>
<dbReference type="EMBL" id="X17692">
    <property type="protein sequence ID" value="CAA35681.1"/>
    <property type="molecule type" value="Genomic_DNA"/>
</dbReference>
<dbReference type="EMBL" id="X17692">
    <property type="protein sequence ID" value="CAA35682.1"/>
    <property type="molecule type" value="Genomic_DNA"/>
</dbReference>
<dbReference type="EMBL" id="CM002236">
    <property type="protein sequence ID" value="ESA44269.1"/>
    <property type="molecule type" value="Genomic_DNA"/>
</dbReference>
<dbReference type="PIR" id="B30809">
    <property type="entry name" value="CSNCM"/>
</dbReference>
<dbReference type="RefSeq" id="XP_011392822.1">
    <molecule id="P10255-1"/>
    <property type="nucleotide sequence ID" value="XM_011394520.1"/>
</dbReference>
<dbReference type="SMR" id="P10255"/>
<dbReference type="STRING" id="367110.P10255"/>
<dbReference type="PaxDb" id="5141-EFNCRP00000000880"/>
<dbReference type="EnsemblFungi" id="ESA44269">
    <molecule id="P10255-1"/>
    <property type="protein sequence ID" value="ESA44269"/>
    <property type="gene ID" value="NCU00726"/>
</dbReference>
<dbReference type="GeneID" id="5847832"/>
<dbReference type="KEGG" id="ncr:NCU00726"/>
<dbReference type="VEuPathDB" id="FungiDB:NCU00726"/>
<dbReference type="HOGENOM" id="CLU_012062_4_3_1"/>
<dbReference type="InParanoid" id="P10255"/>
<dbReference type="OrthoDB" id="193499at2759"/>
<dbReference type="Proteomes" id="UP000001805">
    <property type="component" value="Chromosome 1, Linkage Group I"/>
</dbReference>
<dbReference type="GO" id="GO:0005737">
    <property type="term" value="C:cytoplasm"/>
    <property type="evidence" value="ECO:0000318"/>
    <property type="project" value="GO_Central"/>
</dbReference>
<dbReference type="GO" id="GO:0005739">
    <property type="term" value="C:mitochondrion"/>
    <property type="evidence" value="ECO:0007669"/>
    <property type="project" value="UniProtKB-SubCell"/>
</dbReference>
<dbReference type="GO" id="GO:0016018">
    <property type="term" value="F:cyclosporin A binding"/>
    <property type="evidence" value="ECO:0000318"/>
    <property type="project" value="GO_Central"/>
</dbReference>
<dbReference type="GO" id="GO:0003755">
    <property type="term" value="F:peptidyl-prolyl cis-trans isomerase activity"/>
    <property type="evidence" value="ECO:0000318"/>
    <property type="project" value="GO_Central"/>
</dbReference>
<dbReference type="GO" id="GO:0006457">
    <property type="term" value="P:protein folding"/>
    <property type="evidence" value="ECO:0000318"/>
    <property type="project" value="GO_Central"/>
</dbReference>
<dbReference type="FunFam" id="2.40.100.10:FF:000032">
    <property type="entry name" value="Peptidyl-prolyl cis-trans isomerase"/>
    <property type="match status" value="1"/>
</dbReference>
<dbReference type="Gene3D" id="2.40.100.10">
    <property type="entry name" value="Cyclophilin-like"/>
    <property type="match status" value="1"/>
</dbReference>
<dbReference type="InterPro" id="IPR029000">
    <property type="entry name" value="Cyclophilin-like_dom_sf"/>
</dbReference>
<dbReference type="InterPro" id="IPR020892">
    <property type="entry name" value="Cyclophilin-type_PPIase_CS"/>
</dbReference>
<dbReference type="InterPro" id="IPR002130">
    <property type="entry name" value="Cyclophilin-type_PPIase_dom"/>
</dbReference>
<dbReference type="PANTHER" id="PTHR11071">
    <property type="entry name" value="PEPTIDYL-PROLYL CIS-TRANS ISOMERASE"/>
    <property type="match status" value="1"/>
</dbReference>
<dbReference type="PANTHER" id="PTHR11071:SF385">
    <property type="entry name" value="PEPTIDYL-PROLYL CIS-TRANS ISOMERASE"/>
    <property type="match status" value="1"/>
</dbReference>
<dbReference type="Pfam" id="PF00160">
    <property type="entry name" value="Pro_isomerase"/>
    <property type="match status" value="1"/>
</dbReference>
<dbReference type="PRINTS" id="PR00153">
    <property type="entry name" value="CSAPPISMRASE"/>
</dbReference>
<dbReference type="SUPFAM" id="SSF50891">
    <property type="entry name" value="Cyclophilin-like"/>
    <property type="match status" value="1"/>
</dbReference>
<dbReference type="PROSITE" id="PS00170">
    <property type="entry name" value="CSA_PPIASE_1"/>
    <property type="match status" value="1"/>
</dbReference>
<dbReference type="PROSITE" id="PS50072">
    <property type="entry name" value="CSA_PPIASE_2"/>
    <property type="match status" value="1"/>
</dbReference>
<organism>
    <name type="scientific">Neurospora crassa (strain ATCC 24698 / 74-OR23-1A / CBS 708.71 / DSM 1257 / FGSC 987)</name>
    <dbReference type="NCBI Taxonomy" id="367110"/>
    <lineage>
        <taxon>Eukaryota</taxon>
        <taxon>Fungi</taxon>
        <taxon>Dikarya</taxon>
        <taxon>Ascomycota</taxon>
        <taxon>Pezizomycotina</taxon>
        <taxon>Sordariomycetes</taxon>
        <taxon>Sordariomycetidae</taxon>
        <taxon>Sordariales</taxon>
        <taxon>Sordariaceae</taxon>
        <taxon>Neurospora</taxon>
    </lineage>
</organism>
<sequence>MFGPRHFSVLKTTGSLVSSTFSSSLKPTATFSCARAFSQTSSIMSKVFFDLEWEGPVLGPNNKPTSEIKAQSGRINFTLYDDVVPKTARNFKELCTGQNGFGYKGSSFHRIIPEFMLQGGDFTRGNGTGGKSIYGEKFADENFAKKHVRPGLLSMANAGPNTNGSQFFVTTVPTSWLDGRHVVFGEVADDESMKVVKALEATGSSSGAIRYSKKPTIVDCGAL</sequence>
<accession>P10255</accession>
<accession>A7UVW7</accession>
<accession>A7UVW8</accession>
<accession>Q7RV39</accession>
<accession>V5IRD0</accession>
<comment type="function">
    <text>PPIases accelerate the folding of proteins. It catalyzes the cis-trans isomerization of proline imidic peptide bonds in oligopeptides.</text>
</comment>
<comment type="catalytic activity">
    <reaction>
        <text>[protein]-peptidylproline (omega=180) = [protein]-peptidylproline (omega=0)</text>
        <dbReference type="Rhea" id="RHEA:16237"/>
        <dbReference type="Rhea" id="RHEA-COMP:10747"/>
        <dbReference type="Rhea" id="RHEA-COMP:10748"/>
        <dbReference type="ChEBI" id="CHEBI:83833"/>
        <dbReference type="ChEBI" id="CHEBI:83834"/>
        <dbReference type="EC" id="5.2.1.8"/>
    </reaction>
</comment>
<comment type="activity regulation">
    <text>Binds cyclosporin A (CsA). CsA mediates some of its effects via an inhibitory action on PPIase.</text>
</comment>
<comment type="subcellular location">
    <subcellularLocation>
        <location>Mitochondrion</location>
    </subcellularLocation>
    <subcellularLocation>
        <location>Cytoplasm</location>
    </subcellularLocation>
</comment>
<comment type="alternative products">
    <event type="alternative splicing"/>
    <event type="alternative initiation"/>
    <isoform>
        <id>P10255-1</id>
        <name>Mitochondrial</name>
        <sequence type="displayed"/>
    </isoform>
    <isoform>
        <id>P10255-2</id>
        <name>Cytosolic</name>
        <sequence type="described" ref="VSP_018863"/>
    </isoform>
    <isoform>
        <id>P10255-3</id>
        <name>Short</name>
        <sequence type="described" ref="VSP_029976"/>
    </isoform>
</comment>
<comment type="miscellaneous">
    <molecule>Isoform Cytosolic</molecule>
    <text evidence="3">Produced by alternative initiation.</text>
</comment>
<comment type="miscellaneous">
    <molecule>Isoform Short</molecule>
    <text evidence="3">Produced by alternative splicing. This isoform is found in the cell following 22 hours growth in dark.</text>
</comment>
<comment type="similarity">
    <text evidence="3">Belongs to the cyclophilin-type PPIase family.</text>
</comment>